<reference key="1">
    <citation type="journal article" date="1997" name="Nature">
        <title>The nucleotide sequence of Saccharomyces cerevisiae chromosome XV.</title>
        <authorList>
            <person name="Dujon B."/>
            <person name="Albermann K."/>
            <person name="Aldea M."/>
            <person name="Alexandraki D."/>
            <person name="Ansorge W."/>
            <person name="Arino J."/>
            <person name="Benes V."/>
            <person name="Bohn C."/>
            <person name="Bolotin-Fukuhara M."/>
            <person name="Bordonne R."/>
            <person name="Boyer J."/>
            <person name="Camasses A."/>
            <person name="Casamayor A."/>
            <person name="Casas C."/>
            <person name="Cheret G."/>
            <person name="Cziepluch C."/>
            <person name="Daignan-Fornier B."/>
            <person name="Dang V.-D."/>
            <person name="de Haan M."/>
            <person name="Delius H."/>
            <person name="Durand P."/>
            <person name="Fairhead C."/>
            <person name="Feldmann H."/>
            <person name="Gaillon L."/>
            <person name="Galisson F."/>
            <person name="Gamo F.-J."/>
            <person name="Gancedo C."/>
            <person name="Goffeau A."/>
            <person name="Goulding S.E."/>
            <person name="Grivell L.A."/>
            <person name="Habbig B."/>
            <person name="Hand N.J."/>
            <person name="Hani J."/>
            <person name="Hattenhorst U."/>
            <person name="Hebling U."/>
            <person name="Hernando Y."/>
            <person name="Herrero E."/>
            <person name="Heumann K."/>
            <person name="Hiesel R."/>
            <person name="Hilger F."/>
            <person name="Hofmann B."/>
            <person name="Hollenberg C.P."/>
            <person name="Hughes B."/>
            <person name="Jauniaux J.-C."/>
            <person name="Kalogeropoulos A."/>
            <person name="Katsoulou C."/>
            <person name="Kordes E."/>
            <person name="Lafuente M.J."/>
            <person name="Landt O."/>
            <person name="Louis E.J."/>
            <person name="Maarse A.C."/>
            <person name="Madania A."/>
            <person name="Mannhaupt G."/>
            <person name="Marck C."/>
            <person name="Martin R.P."/>
            <person name="Mewes H.-W."/>
            <person name="Michaux G."/>
            <person name="Paces V."/>
            <person name="Parle-McDermott A.G."/>
            <person name="Pearson B.M."/>
            <person name="Perrin A."/>
            <person name="Pettersson B."/>
            <person name="Poch O."/>
            <person name="Pohl T.M."/>
            <person name="Poirey R."/>
            <person name="Portetelle D."/>
            <person name="Pujol A."/>
            <person name="Purnelle B."/>
            <person name="Ramezani Rad M."/>
            <person name="Rechmann S."/>
            <person name="Schwager C."/>
            <person name="Schweizer M."/>
            <person name="Sor F."/>
            <person name="Sterky F."/>
            <person name="Tarassov I.A."/>
            <person name="Teodoru C."/>
            <person name="Tettelin H."/>
            <person name="Thierry A."/>
            <person name="Tobiasch E."/>
            <person name="Tzermia M."/>
            <person name="Uhlen M."/>
            <person name="Unseld M."/>
            <person name="Valens M."/>
            <person name="Vandenbol M."/>
            <person name="Vetter I."/>
            <person name="Vlcek C."/>
            <person name="Voet M."/>
            <person name="Volckaert G."/>
            <person name="Voss H."/>
            <person name="Wambutt R."/>
            <person name="Wedler H."/>
            <person name="Wiemann S."/>
            <person name="Winsor B."/>
            <person name="Wolfe K.H."/>
            <person name="Zollner A."/>
            <person name="Zumstein E."/>
            <person name="Kleine K."/>
        </authorList>
    </citation>
    <scope>NUCLEOTIDE SEQUENCE [LARGE SCALE GENOMIC DNA]</scope>
    <source>
        <strain>ATCC 204508 / S288c</strain>
    </source>
</reference>
<reference key="2">
    <citation type="journal article" date="2014" name="G3 (Bethesda)">
        <title>The reference genome sequence of Saccharomyces cerevisiae: Then and now.</title>
        <authorList>
            <person name="Engel S.R."/>
            <person name="Dietrich F.S."/>
            <person name="Fisk D.G."/>
            <person name="Binkley G."/>
            <person name="Balakrishnan R."/>
            <person name="Costanzo M.C."/>
            <person name="Dwight S.S."/>
            <person name="Hitz B.C."/>
            <person name="Karra K."/>
            <person name="Nash R.S."/>
            <person name="Weng S."/>
            <person name="Wong E.D."/>
            <person name="Lloyd P."/>
            <person name="Skrzypek M.S."/>
            <person name="Miyasato S.R."/>
            <person name="Simison M."/>
            <person name="Cherry J.M."/>
        </authorList>
    </citation>
    <scope>GENOME REANNOTATION</scope>
    <source>
        <strain>ATCC 204508 / S288c</strain>
    </source>
</reference>
<reference key="3">
    <citation type="journal article" date="2007" name="Genome Res.">
        <title>Approaching a complete repository of sequence-verified protein-encoding clones for Saccharomyces cerevisiae.</title>
        <authorList>
            <person name="Hu Y."/>
            <person name="Rolfs A."/>
            <person name="Bhullar B."/>
            <person name="Murthy T.V.S."/>
            <person name="Zhu C."/>
            <person name="Berger M.F."/>
            <person name="Camargo A.A."/>
            <person name="Kelley F."/>
            <person name="McCarron S."/>
            <person name="Jepson D."/>
            <person name="Richardson A."/>
            <person name="Raphael J."/>
            <person name="Moreira D."/>
            <person name="Taycher E."/>
            <person name="Zuo D."/>
            <person name="Mohr S."/>
            <person name="Kane M.F."/>
            <person name="Williamson J."/>
            <person name="Simpson A.J.G."/>
            <person name="Bulyk M.L."/>
            <person name="Harlow E."/>
            <person name="Marsischky G."/>
            <person name="Kolodner R.D."/>
            <person name="LaBaer J."/>
        </authorList>
    </citation>
    <scope>NUCLEOTIDE SEQUENCE [GENOMIC DNA]</scope>
    <source>
        <strain>ATCC 204508 / S288c</strain>
    </source>
</reference>
<organism>
    <name type="scientific">Saccharomyces cerevisiae (strain ATCC 204508 / S288c)</name>
    <name type="common">Baker's yeast</name>
    <dbReference type="NCBI Taxonomy" id="559292"/>
    <lineage>
        <taxon>Eukaryota</taxon>
        <taxon>Fungi</taxon>
        <taxon>Dikarya</taxon>
        <taxon>Ascomycota</taxon>
        <taxon>Saccharomycotina</taxon>
        <taxon>Saccharomycetes</taxon>
        <taxon>Saccharomycetales</taxon>
        <taxon>Saccharomycetaceae</taxon>
        <taxon>Saccharomyces</taxon>
    </lineage>
</organism>
<feature type="chain" id="PRO_0000235937" description="Uncharacterized protein YOR012W">
    <location>
        <begin position="1"/>
        <end position="137"/>
    </location>
</feature>
<name>YO012_YEAST</name>
<protein>
    <recommendedName>
        <fullName>Uncharacterized protein YOR012W</fullName>
    </recommendedName>
</protein>
<dbReference type="EMBL" id="X87331">
    <property type="protein sequence ID" value="CAA60761.1"/>
    <property type="molecule type" value="Genomic_DNA"/>
</dbReference>
<dbReference type="EMBL" id="Z74920">
    <property type="protein sequence ID" value="CAA99200.1"/>
    <property type="molecule type" value="Genomic_DNA"/>
</dbReference>
<dbReference type="EMBL" id="AY692569">
    <property type="protein sequence ID" value="AAT92588.1"/>
    <property type="molecule type" value="Genomic_DNA"/>
</dbReference>
<dbReference type="EMBL" id="BK006948">
    <property type="protein sequence ID" value="DAA10796.1"/>
    <property type="molecule type" value="Genomic_DNA"/>
</dbReference>
<dbReference type="PIR" id="S54618">
    <property type="entry name" value="S54618"/>
</dbReference>
<dbReference type="RefSeq" id="NP_014655.1">
    <property type="nucleotide sequence ID" value="NM_001183431.1"/>
</dbReference>
<dbReference type="SMR" id="Q12351"/>
<dbReference type="BioGRID" id="34418">
    <property type="interactions" value="82"/>
</dbReference>
<dbReference type="FunCoup" id="Q12351">
    <property type="interactions" value="18"/>
</dbReference>
<dbReference type="IntAct" id="Q12351">
    <property type="interactions" value="1"/>
</dbReference>
<dbReference type="STRING" id="4932.YOR012W"/>
<dbReference type="PaxDb" id="4932-YOR012W"/>
<dbReference type="PRIDE" id="Q12351"/>
<dbReference type="EnsemblFungi" id="YOR012W_mRNA">
    <property type="protein sequence ID" value="YOR012W"/>
    <property type="gene ID" value="YOR012W"/>
</dbReference>
<dbReference type="GeneID" id="854177"/>
<dbReference type="KEGG" id="sce:YOR012W"/>
<dbReference type="AGR" id="SGD:S000005538"/>
<dbReference type="SGD" id="S000005538">
    <property type="gene designation" value="YOR012W"/>
</dbReference>
<dbReference type="VEuPathDB" id="FungiDB:YOR012W"/>
<dbReference type="eggNOG" id="ENOG502RYMB">
    <property type="taxonomic scope" value="Eukaryota"/>
</dbReference>
<dbReference type="GeneTree" id="ENSGT00940000176382"/>
<dbReference type="HOGENOM" id="CLU_2147823_0_0_1"/>
<dbReference type="InParanoid" id="Q12351"/>
<dbReference type="OMA" id="XLPLCHR"/>
<dbReference type="OrthoDB" id="410198at2759"/>
<dbReference type="BioCyc" id="YEAST:G3O-33562-MONOMER"/>
<dbReference type="BioGRID-ORCS" id="854177">
    <property type="hits" value="1 hit in 10 CRISPR screens"/>
</dbReference>
<dbReference type="PRO" id="PR:Q12351"/>
<dbReference type="Proteomes" id="UP000002311">
    <property type="component" value="Chromosome XV"/>
</dbReference>
<dbReference type="RNAct" id="Q12351">
    <property type="molecule type" value="protein"/>
</dbReference>
<dbReference type="InterPro" id="IPR052564">
    <property type="entry name" value="N-acetyltrans/Recomb-assoc"/>
</dbReference>
<dbReference type="PANTHER" id="PTHR43451:SF1">
    <property type="entry name" value="ACETYLTRANSFERASE"/>
    <property type="match status" value="1"/>
</dbReference>
<dbReference type="PANTHER" id="PTHR43451">
    <property type="entry name" value="ACETYLTRANSFERASE (GNAT) FAMILY PROTEIN"/>
    <property type="match status" value="1"/>
</dbReference>
<gene>
    <name type="ordered locus">YOR012W</name>
    <name type="ORF">OR26.02</name>
</gene>
<accession>Q12351</accession>
<accession>D6W280</accession>
<keyword id="KW-1185">Reference proteome</keyword>
<sequence>MVASSINEESSLAVNLTSDVEKASKTLFKAFEKSYANDYLMKKFFHIPITEKVSRARINAMIHYYTTCYHDLDGEIAEANDFDAVAIWSRPGCHLPATLSDDESFNKIFFSRLDCEEARSHASGNGLLLPLCHRKRS</sequence>
<proteinExistence type="predicted"/>